<reference key="1">
    <citation type="journal article" date="2007" name="Appl. Environ. Microbiol.">
        <title>Genome sequence of the cellulolytic gliding bacterium Cytophaga hutchinsonii.</title>
        <authorList>
            <person name="Xie G."/>
            <person name="Bruce D.C."/>
            <person name="Challacombe J.F."/>
            <person name="Chertkov O."/>
            <person name="Detter J.C."/>
            <person name="Gilna P."/>
            <person name="Han C.S."/>
            <person name="Lucas S."/>
            <person name="Misra M."/>
            <person name="Myers G.L."/>
            <person name="Richardson P."/>
            <person name="Tapia R."/>
            <person name="Thayer N."/>
            <person name="Thompson L.S."/>
            <person name="Brettin T.S."/>
            <person name="Henrissat B."/>
            <person name="Wilson D.B."/>
            <person name="McBride M.J."/>
        </authorList>
    </citation>
    <scope>NUCLEOTIDE SEQUENCE [LARGE SCALE GENOMIC DNA]</scope>
    <source>
        <strain>ATCC 33406 / DSM 1761 / JCM 20678 / CIP 103989 / IAM 12607 / NBRC 15051 / NCIMB 9469 / D465</strain>
    </source>
</reference>
<accession>Q11UK1</accession>
<sequence length="64" mass="7198">MPKVKTKSGAKKRFKLTGSGKIKRKSAYHSHILTKKSTKRKRNLVHAHLVSAADESNVRAMLKI</sequence>
<proteinExistence type="inferred from homology"/>
<dbReference type="EMBL" id="CP000383">
    <property type="protein sequence ID" value="ABG61079.1"/>
    <property type="molecule type" value="Genomic_DNA"/>
</dbReference>
<dbReference type="RefSeq" id="WP_011585030.1">
    <property type="nucleotide sequence ID" value="NC_008255.1"/>
</dbReference>
<dbReference type="SMR" id="Q11UK1"/>
<dbReference type="STRING" id="269798.CHU_1644a"/>
<dbReference type="KEGG" id="chu:CHU_1644a"/>
<dbReference type="eggNOG" id="COG0291">
    <property type="taxonomic scope" value="Bacteria"/>
</dbReference>
<dbReference type="HOGENOM" id="CLU_169643_4_3_10"/>
<dbReference type="OrthoDB" id="47476at2"/>
<dbReference type="Proteomes" id="UP000001822">
    <property type="component" value="Chromosome"/>
</dbReference>
<dbReference type="GO" id="GO:0022625">
    <property type="term" value="C:cytosolic large ribosomal subunit"/>
    <property type="evidence" value="ECO:0007669"/>
    <property type="project" value="TreeGrafter"/>
</dbReference>
<dbReference type="GO" id="GO:0003735">
    <property type="term" value="F:structural constituent of ribosome"/>
    <property type="evidence" value="ECO:0007669"/>
    <property type="project" value="InterPro"/>
</dbReference>
<dbReference type="GO" id="GO:0006412">
    <property type="term" value="P:translation"/>
    <property type="evidence" value="ECO:0007669"/>
    <property type="project" value="UniProtKB-UniRule"/>
</dbReference>
<dbReference type="FunFam" id="4.10.410.60:FF:000001">
    <property type="entry name" value="50S ribosomal protein L35"/>
    <property type="match status" value="1"/>
</dbReference>
<dbReference type="Gene3D" id="4.10.410.60">
    <property type="match status" value="1"/>
</dbReference>
<dbReference type="HAMAP" id="MF_00514">
    <property type="entry name" value="Ribosomal_bL35"/>
    <property type="match status" value="1"/>
</dbReference>
<dbReference type="InterPro" id="IPR001706">
    <property type="entry name" value="Ribosomal_bL35"/>
</dbReference>
<dbReference type="InterPro" id="IPR021137">
    <property type="entry name" value="Ribosomal_bL35-like"/>
</dbReference>
<dbReference type="InterPro" id="IPR018265">
    <property type="entry name" value="Ribosomal_bL35_CS"/>
</dbReference>
<dbReference type="InterPro" id="IPR037229">
    <property type="entry name" value="Ribosomal_bL35_sf"/>
</dbReference>
<dbReference type="NCBIfam" id="TIGR00001">
    <property type="entry name" value="rpmI_bact"/>
    <property type="match status" value="1"/>
</dbReference>
<dbReference type="PANTHER" id="PTHR33343">
    <property type="entry name" value="54S RIBOSOMAL PROTEIN BL35M"/>
    <property type="match status" value="1"/>
</dbReference>
<dbReference type="PANTHER" id="PTHR33343:SF1">
    <property type="entry name" value="LARGE RIBOSOMAL SUBUNIT PROTEIN BL35M"/>
    <property type="match status" value="1"/>
</dbReference>
<dbReference type="Pfam" id="PF01632">
    <property type="entry name" value="Ribosomal_L35p"/>
    <property type="match status" value="1"/>
</dbReference>
<dbReference type="PRINTS" id="PR00064">
    <property type="entry name" value="RIBOSOMALL35"/>
</dbReference>
<dbReference type="SUPFAM" id="SSF143034">
    <property type="entry name" value="L35p-like"/>
    <property type="match status" value="1"/>
</dbReference>
<dbReference type="PROSITE" id="PS00936">
    <property type="entry name" value="RIBOSOMAL_L35"/>
    <property type="match status" value="1"/>
</dbReference>
<organism>
    <name type="scientific">Cytophaga hutchinsonii (strain ATCC 33406 / DSM 1761 / CIP 103989 / NBRC 15051 / NCIMB 9469 / D465)</name>
    <dbReference type="NCBI Taxonomy" id="269798"/>
    <lineage>
        <taxon>Bacteria</taxon>
        <taxon>Pseudomonadati</taxon>
        <taxon>Bacteroidota</taxon>
        <taxon>Cytophagia</taxon>
        <taxon>Cytophagales</taxon>
        <taxon>Cytophagaceae</taxon>
        <taxon>Cytophaga</taxon>
    </lineage>
</organism>
<name>RL35_CYTH3</name>
<gene>
    <name evidence="1" type="primary">rpmI</name>
    <name type="ordered locus">CHU_1644.1</name>
    <name type="ORF">CHU_1644a</name>
</gene>
<feature type="chain" id="PRO_0000258665" description="Large ribosomal subunit protein bL35">
    <location>
        <begin position="1"/>
        <end position="64"/>
    </location>
</feature>
<feature type="region of interest" description="Disordered" evidence="2">
    <location>
        <begin position="1"/>
        <end position="28"/>
    </location>
</feature>
<protein>
    <recommendedName>
        <fullName evidence="1">Large ribosomal subunit protein bL35</fullName>
    </recommendedName>
    <alternativeName>
        <fullName evidence="3">50S ribosomal protein L35</fullName>
    </alternativeName>
</protein>
<keyword id="KW-1185">Reference proteome</keyword>
<keyword id="KW-0687">Ribonucleoprotein</keyword>
<keyword id="KW-0689">Ribosomal protein</keyword>
<evidence type="ECO:0000255" key="1">
    <source>
        <dbReference type="HAMAP-Rule" id="MF_00514"/>
    </source>
</evidence>
<evidence type="ECO:0000256" key="2">
    <source>
        <dbReference type="SAM" id="MobiDB-lite"/>
    </source>
</evidence>
<evidence type="ECO:0000305" key="3"/>
<comment type="similarity">
    <text evidence="1">Belongs to the bacterial ribosomal protein bL35 family.</text>
</comment>